<reference key="1">
    <citation type="journal article" date="2001" name="Proc. Natl. Acad. Sci. U.S.A.">
        <title>Analysis of the chromosome sequence of the legume symbiont Sinorhizobium meliloti strain 1021.</title>
        <authorList>
            <person name="Capela D."/>
            <person name="Barloy-Hubler F."/>
            <person name="Gouzy J."/>
            <person name="Bothe G."/>
            <person name="Ampe F."/>
            <person name="Batut J."/>
            <person name="Boistard P."/>
            <person name="Becker A."/>
            <person name="Boutry M."/>
            <person name="Cadieu E."/>
            <person name="Dreano S."/>
            <person name="Gloux S."/>
            <person name="Godrie T."/>
            <person name="Goffeau A."/>
            <person name="Kahn D."/>
            <person name="Kiss E."/>
            <person name="Lelaure V."/>
            <person name="Masuy D."/>
            <person name="Pohl T."/>
            <person name="Portetelle D."/>
            <person name="Puehler A."/>
            <person name="Purnelle B."/>
            <person name="Ramsperger U."/>
            <person name="Renard C."/>
            <person name="Thebault P."/>
            <person name="Vandenbol M."/>
            <person name="Weidner S."/>
            <person name="Galibert F."/>
        </authorList>
    </citation>
    <scope>NUCLEOTIDE SEQUENCE [LARGE SCALE GENOMIC DNA]</scope>
    <source>
        <strain>1021</strain>
    </source>
</reference>
<reference key="2">
    <citation type="journal article" date="2001" name="Science">
        <title>The composite genome of the legume symbiont Sinorhizobium meliloti.</title>
        <authorList>
            <person name="Galibert F."/>
            <person name="Finan T.M."/>
            <person name="Long S.R."/>
            <person name="Puehler A."/>
            <person name="Abola P."/>
            <person name="Ampe F."/>
            <person name="Barloy-Hubler F."/>
            <person name="Barnett M.J."/>
            <person name="Becker A."/>
            <person name="Boistard P."/>
            <person name="Bothe G."/>
            <person name="Boutry M."/>
            <person name="Bowser L."/>
            <person name="Buhrmester J."/>
            <person name="Cadieu E."/>
            <person name="Capela D."/>
            <person name="Chain P."/>
            <person name="Cowie A."/>
            <person name="Davis R.W."/>
            <person name="Dreano S."/>
            <person name="Federspiel N.A."/>
            <person name="Fisher R.F."/>
            <person name="Gloux S."/>
            <person name="Godrie T."/>
            <person name="Goffeau A."/>
            <person name="Golding B."/>
            <person name="Gouzy J."/>
            <person name="Gurjal M."/>
            <person name="Hernandez-Lucas I."/>
            <person name="Hong A."/>
            <person name="Huizar L."/>
            <person name="Hyman R.W."/>
            <person name="Jones T."/>
            <person name="Kahn D."/>
            <person name="Kahn M.L."/>
            <person name="Kalman S."/>
            <person name="Keating D.H."/>
            <person name="Kiss E."/>
            <person name="Komp C."/>
            <person name="Lelaure V."/>
            <person name="Masuy D."/>
            <person name="Palm C."/>
            <person name="Peck M.C."/>
            <person name="Pohl T.M."/>
            <person name="Portetelle D."/>
            <person name="Purnelle B."/>
            <person name="Ramsperger U."/>
            <person name="Surzycki R."/>
            <person name="Thebault P."/>
            <person name="Vandenbol M."/>
            <person name="Vorhoelter F.J."/>
            <person name="Weidner S."/>
            <person name="Wells D.H."/>
            <person name="Wong K."/>
            <person name="Yeh K.-C."/>
            <person name="Batut J."/>
        </authorList>
    </citation>
    <scope>NUCLEOTIDE SEQUENCE [LARGE SCALE GENOMIC DNA]</scope>
    <source>
        <strain>1021</strain>
    </source>
</reference>
<sequence>MHATTIITVRKGGKVVMAGDGQVSLGQTVMKGNARKVRRLSKGDVIAGFAGATADAFTLLERLEAKLEQYPDQLMRAAVELAKDWRTNKYLRNLEAMMLVADRTVTLAITGNGDVLEPEHGTIAIGSGGNYAFAAARALMDSDKSAEEIARRALEIAGDICVYTNHNVVVETLDAE</sequence>
<dbReference type="EC" id="3.4.25.2" evidence="1"/>
<dbReference type="EMBL" id="AL591688">
    <property type="protein sequence ID" value="CAC41443.1"/>
    <property type="status" value="ALT_INIT"/>
    <property type="molecule type" value="Genomic_DNA"/>
</dbReference>
<dbReference type="RefSeq" id="NP_384162.1">
    <property type="nucleotide sequence ID" value="NC_003047.1"/>
</dbReference>
<dbReference type="SMR" id="Q92TA9"/>
<dbReference type="MEROPS" id="T01.006"/>
<dbReference type="EnsemblBacteria" id="CAC41443">
    <property type="protein sequence ID" value="CAC41443"/>
    <property type="gene ID" value="SMc02575"/>
</dbReference>
<dbReference type="KEGG" id="sme:SMc02575"/>
<dbReference type="PATRIC" id="fig|266834.11.peg.1410"/>
<dbReference type="eggNOG" id="COG5405">
    <property type="taxonomic scope" value="Bacteria"/>
</dbReference>
<dbReference type="HOGENOM" id="CLU_093872_1_0_5"/>
<dbReference type="OrthoDB" id="9804884at2"/>
<dbReference type="BRENDA" id="3.4.25.2">
    <property type="organism ID" value="5347"/>
</dbReference>
<dbReference type="Proteomes" id="UP000001976">
    <property type="component" value="Chromosome"/>
</dbReference>
<dbReference type="GO" id="GO:0009376">
    <property type="term" value="C:HslUV protease complex"/>
    <property type="evidence" value="ECO:0007669"/>
    <property type="project" value="UniProtKB-UniRule"/>
</dbReference>
<dbReference type="GO" id="GO:0005839">
    <property type="term" value="C:proteasome core complex"/>
    <property type="evidence" value="ECO:0007669"/>
    <property type="project" value="InterPro"/>
</dbReference>
<dbReference type="GO" id="GO:0046872">
    <property type="term" value="F:metal ion binding"/>
    <property type="evidence" value="ECO:0007669"/>
    <property type="project" value="UniProtKB-KW"/>
</dbReference>
<dbReference type="GO" id="GO:0004298">
    <property type="term" value="F:threonine-type endopeptidase activity"/>
    <property type="evidence" value="ECO:0007669"/>
    <property type="project" value="UniProtKB-KW"/>
</dbReference>
<dbReference type="GO" id="GO:0051603">
    <property type="term" value="P:proteolysis involved in protein catabolic process"/>
    <property type="evidence" value="ECO:0007669"/>
    <property type="project" value="InterPro"/>
</dbReference>
<dbReference type="CDD" id="cd01913">
    <property type="entry name" value="protease_HslV"/>
    <property type="match status" value="1"/>
</dbReference>
<dbReference type="FunFam" id="3.60.20.10:FF:000002">
    <property type="entry name" value="ATP-dependent protease subunit HslV"/>
    <property type="match status" value="1"/>
</dbReference>
<dbReference type="Gene3D" id="3.60.20.10">
    <property type="entry name" value="Glutamine Phosphoribosylpyrophosphate, subunit 1, domain 1"/>
    <property type="match status" value="1"/>
</dbReference>
<dbReference type="HAMAP" id="MF_00248">
    <property type="entry name" value="HslV"/>
    <property type="match status" value="1"/>
</dbReference>
<dbReference type="InterPro" id="IPR022281">
    <property type="entry name" value="ATP-dep_Prtase_HsIV_su"/>
</dbReference>
<dbReference type="InterPro" id="IPR029055">
    <property type="entry name" value="Ntn_hydrolases_N"/>
</dbReference>
<dbReference type="InterPro" id="IPR001353">
    <property type="entry name" value="Proteasome_sua/b"/>
</dbReference>
<dbReference type="InterPro" id="IPR023333">
    <property type="entry name" value="Proteasome_suB-type"/>
</dbReference>
<dbReference type="NCBIfam" id="TIGR03692">
    <property type="entry name" value="ATP_dep_HslV"/>
    <property type="match status" value="1"/>
</dbReference>
<dbReference type="NCBIfam" id="NF003964">
    <property type="entry name" value="PRK05456.1"/>
    <property type="match status" value="1"/>
</dbReference>
<dbReference type="PANTHER" id="PTHR32194:SF7">
    <property type="entry name" value="ATP-DEPENDENT PROTEASE SUBUNIT HSLV"/>
    <property type="match status" value="1"/>
</dbReference>
<dbReference type="PANTHER" id="PTHR32194">
    <property type="entry name" value="METALLOPROTEASE TLDD"/>
    <property type="match status" value="1"/>
</dbReference>
<dbReference type="Pfam" id="PF00227">
    <property type="entry name" value="Proteasome"/>
    <property type="match status" value="1"/>
</dbReference>
<dbReference type="PIRSF" id="PIRSF039093">
    <property type="entry name" value="HslV"/>
    <property type="match status" value="1"/>
</dbReference>
<dbReference type="SUPFAM" id="SSF56235">
    <property type="entry name" value="N-terminal nucleophile aminohydrolases (Ntn hydrolases)"/>
    <property type="match status" value="1"/>
</dbReference>
<dbReference type="PROSITE" id="PS51476">
    <property type="entry name" value="PROTEASOME_BETA_2"/>
    <property type="match status" value="1"/>
</dbReference>
<feature type="chain" id="PRO_0000148137" description="ATP-dependent protease subunit HslV">
    <location>
        <begin position="1"/>
        <end position="176"/>
    </location>
</feature>
<feature type="active site" evidence="1">
    <location>
        <position position="4"/>
    </location>
</feature>
<feature type="binding site" evidence="1">
    <location>
        <position position="158"/>
    </location>
    <ligand>
        <name>Na(+)</name>
        <dbReference type="ChEBI" id="CHEBI:29101"/>
    </ligand>
</feature>
<feature type="binding site" evidence="1">
    <location>
        <position position="161"/>
    </location>
    <ligand>
        <name>Na(+)</name>
        <dbReference type="ChEBI" id="CHEBI:29101"/>
    </ligand>
</feature>
<feature type="binding site" evidence="1">
    <location>
        <position position="164"/>
    </location>
    <ligand>
        <name>Na(+)</name>
        <dbReference type="ChEBI" id="CHEBI:29101"/>
    </ligand>
</feature>
<gene>
    <name evidence="1" type="primary">hslV</name>
    <name type="ordered locus">R00056</name>
    <name type="ORF">SMc02575</name>
</gene>
<accession>Q92TA9</accession>
<comment type="function">
    <text evidence="1">Protease subunit of a proteasome-like degradation complex believed to be a general protein degrading machinery.</text>
</comment>
<comment type="catalytic activity">
    <reaction evidence="1">
        <text>ATP-dependent cleavage of peptide bonds with broad specificity.</text>
        <dbReference type="EC" id="3.4.25.2"/>
    </reaction>
</comment>
<comment type="activity regulation">
    <text evidence="1">Allosterically activated by HslU binding.</text>
</comment>
<comment type="subunit">
    <text evidence="1">A double ring-shaped homohexamer of HslV is capped on each side by a ring-shaped HslU homohexamer. The assembly of the HslU/HslV complex is dependent on binding of ATP.</text>
</comment>
<comment type="subcellular location">
    <subcellularLocation>
        <location evidence="1">Cytoplasm</location>
    </subcellularLocation>
</comment>
<comment type="similarity">
    <text evidence="1">Belongs to the peptidase T1B family. HslV subfamily.</text>
</comment>
<comment type="sequence caution" evidence="2">
    <conflict type="erroneous initiation">
        <sequence resource="EMBL-CDS" id="CAC41443"/>
    </conflict>
</comment>
<protein>
    <recommendedName>
        <fullName evidence="1">ATP-dependent protease subunit HslV</fullName>
        <ecNumber evidence="1">3.4.25.2</ecNumber>
    </recommendedName>
</protein>
<evidence type="ECO:0000255" key="1">
    <source>
        <dbReference type="HAMAP-Rule" id="MF_00248"/>
    </source>
</evidence>
<evidence type="ECO:0000305" key="2"/>
<name>HSLV_RHIME</name>
<proteinExistence type="inferred from homology"/>
<keyword id="KW-0021">Allosteric enzyme</keyword>
<keyword id="KW-0963">Cytoplasm</keyword>
<keyword id="KW-0378">Hydrolase</keyword>
<keyword id="KW-0479">Metal-binding</keyword>
<keyword id="KW-0645">Protease</keyword>
<keyword id="KW-1185">Reference proteome</keyword>
<keyword id="KW-0915">Sodium</keyword>
<keyword id="KW-0888">Threonine protease</keyword>
<organism>
    <name type="scientific">Rhizobium meliloti (strain 1021)</name>
    <name type="common">Ensifer meliloti</name>
    <name type="synonym">Sinorhizobium meliloti</name>
    <dbReference type="NCBI Taxonomy" id="266834"/>
    <lineage>
        <taxon>Bacteria</taxon>
        <taxon>Pseudomonadati</taxon>
        <taxon>Pseudomonadota</taxon>
        <taxon>Alphaproteobacteria</taxon>
        <taxon>Hyphomicrobiales</taxon>
        <taxon>Rhizobiaceae</taxon>
        <taxon>Sinorhizobium/Ensifer group</taxon>
        <taxon>Sinorhizobium</taxon>
    </lineage>
</organism>